<keyword id="KW-0067">ATP-binding</keyword>
<keyword id="KW-0418">Kinase</keyword>
<keyword id="KW-0460">Magnesium</keyword>
<keyword id="KW-0547">Nucleotide-binding</keyword>
<keyword id="KW-0808">Transferase</keyword>
<sequence>MKNILSIQSHVVFGHAGNSXAEFPXRRMGVNVWPLNTVQFSNHTQYPEKWTGCVMXAEHITEIVDGIAAIGKLAQCDAVLSGYLGSAEQGRRIVDIVKKVKQANPNAWYFCDPVMGHPEKGCIVPPEVSGVLCEDALPISDIIAPNLLELETLAGGATLHNVDQCVKAARQLCQQGPKIVLVKHLSRAGFRHDRFEMLLVTADHSWHVSRPLVDFGERQPVGVGDLTSGLMLVDLLKGVELKTALEHVAAAVYEVMLKTKEMNEYELQLVAAQDQMVHPTHNFCATQLD</sequence>
<evidence type="ECO:0000255" key="1">
    <source>
        <dbReference type="HAMAP-Rule" id="MF_01639"/>
    </source>
</evidence>
<evidence type="ECO:0000305" key="2"/>
<gene>
    <name evidence="1" type="primary">pdxY</name>
</gene>
<accession>Q51892</accession>
<dbReference type="EC" id="2.7.1.35" evidence="1"/>
<dbReference type="EMBL" id="U38482">
    <property type="protein sequence ID" value="AAC44363.1"/>
    <property type="status" value="ALT_FRAME"/>
    <property type="molecule type" value="Genomic_DNA"/>
</dbReference>
<dbReference type="PIR" id="S71884">
    <property type="entry name" value="S71884"/>
</dbReference>
<dbReference type="STRING" id="584.AOUC001_08660"/>
<dbReference type="UniPathway" id="UPA01068">
    <property type="reaction ID" value="UER00298"/>
</dbReference>
<dbReference type="GO" id="GO:0005829">
    <property type="term" value="C:cytosol"/>
    <property type="evidence" value="ECO:0007669"/>
    <property type="project" value="TreeGrafter"/>
</dbReference>
<dbReference type="GO" id="GO:0005524">
    <property type="term" value="F:ATP binding"/>
    <property type="evidence" value="ECO:0007669"/>
    <property type="project" value="UniProtKB-UniRule"/>
</dbReference>
<dbReference type="GO" id="GO:0000287">
    <property type="term" value="F:magnesium ion binding"/>
    <property type="evidence" value="ECO:0007669"/>
    <property type="project" value="UniProtKB-UniRule"/>
</dbReference>
<dbReference type="GO" id="GO:0008478">
    <property type="term" value="F:pyridoxal kinase activity"/>
    <property type="evidence" value="ECO:0007669"/>
    <property type="project" value="UniProtKB-UniRule"/>
</dbReference>
<dbReference type="GO" id="GO:0009443">
    <property type="term" value="P:pyridoxal 5'-phosphate salvage"/>
    <property type="evidence" value="ECO:0007669"/>
    <property type="project" value="UniProtKB-UniRule"/>
</dbReference>
<dbReference type="CDD" id="cd01173">
    <property type="entry name" value="pyridoxal_pyridoxamine_kinase"/>
    <property type="match status" value="1"/>
</dbReference>
<dbReference type="FunFam" id="3.40.1190.20:FF:000008">
    <property type="entry name" value="Pyridoxal kinase PdxY"/>
    <property type="match status" value="1"/>
</dbReference>
<dbReference type="Gene3D" id="3.40.1190.20">
    <property type="match status" value="1"/>
</dbReference>
<dbReference type="HAMAP" id="MF_01639">
    <property type="entry name" value="PdxY"/>
    <property type="match status" value="1"/>
</dbReference>
<dbReference type="InterPro" id="IPR013749">
    <property type="entry name" value="PM/HMP-P_kinase-1"/>
</dbReference>
<dbReference type="InterPro" id="IPR004625">
    <property type="entry name" value="PyrdxlKinase"/>
</dbReference>
<dbReference type="InterPro" id="IPR023685">
    <property type="entry name" value="Pyridoxal_kinase_PdxY"/>
</dbReference>
<dbReference type="InterPro" id="IPR029056">
    <property type="entry name" value="Ribokinase-like"/>
</dbReference>
<dbReference type="NCBIfam" id="NF004398">
    <property type="entry name" value="PRK05756.1"/>
    <property type="match status" value="1"/>
</dbReference>
<dbReference type="NCBIfam" id="TIGR00687">
    <property type="entry name" value="pyridox_kin"/>
    <property type="match status" value="1"/>
</dbReference>
<dbReference type="PANTHER" id="PTHR10534">
    <property type="entry name" value="PYRIDOXAL KINASE"/>
    <property type="match status" value="1"/>
</dbReference>
<dbReference type="PANTHER" id="PTHR10534:SF2">
    <property type="entry name" value="PYRIDOXAL KINASE"/>
    <property type="match status" value="1"/>
</dbReference>
<dbReference type="Pfam" id="PF08543">
    <property type="entry name" value="Phos_pyr_kin"/>
    <property type="match status" value="1"/>
</dbReference>
<dbReference type="SUPFAM" id="SSF53613">
    <property type="entry name" value="Ribokinase-like"/>
    <property type="match status" value="1"/>
</dbReference>
<organism>
    <name type="scientific">Proteus mirabilis</name>
    <dbReference type="NCBI Taxonomy" id="584"/>
    <lineage>
        <taxon>Bacteria</taxon>
        <taxon>Pseudomonadati</taxon>
        <taxon>Pseudomonadota</taxon>
        <taxon>Gammaproteobacteria</taxon>
        <taxon>Enterobacterales</taxon>
        <taxon>Morganellaceae</taxon>
        <taxon>Proteus</taxon>
    </lineage>
</organism>
<protein>
    <recommendedName>
        <fullName evidence="1">Pyridoxal kinase PdxY</fullName>
        <shortName evidence="1">PL kinase</shortName>
        <ecNumber evidence="1">2.7.1.35</ecNumber>
    </recommendedName>
</protein>
<proteinExistence type="inferred from homology"/>
<name>PDXY_PROMI</name>
<feature type="chain" id="PRO_0000213347" description="Pyridoxal kinase PdxY">
    <location>
        <begin position="1"/>
        <end position="289"/>
    </location>
</feature>
<feature type="binding site" evidence="1">
    <location>
        <position position="9"/>
    </location>
    <ligand>
        <name>substrate</name>
    </ligand>
</feature>
<feature type="binding site" evidence="1">
    <location>
        <begin position="44"/>
        <end position="45"/>
    </location>
    <ligand>
        <name>substrate</name>
    </ligand>
</feature>
<feature type="binding site" evidence="1">
    <location>
        <position position="112"/>
    </location>
    <ligand>
        <name>ATP</name>
        <dbReference type="ChEBI" id="CHEBI:30616"/>
    </ligand>
</feature>
<feature type="binding site" evidence="1">
    <location>
        <position position="144"/>
    </location>
    <ligand>
        <name>ATP</name>
        <dbReference type="ChEBI" id="CHEBI:30616"/>
    </ligand>
</feature>
<feature type="binding site" evidence="1">
    <location>
        <position position="149"/>
    </location>
    <ligand>
        <name>ATP</name>
        <dbReference type="ChEBI" id="CHEBI:30616"/>
    </ligand>
</feature>
<feature type="binding site" evidence="1">
    <location>
        <position position="183"/>
    </location>
    <ligand>
        <name>ATP</name>
        <dbReference type="ChEBI" id="CHEBI:30616"/>
    </ligand>
</feature>
<feature type="binding site" evidence="1">
    <location>
        <begin position="210"/>
        <end position="213"/>
    </location>
    <ligand>
        <name>ATP</name>
        <dbReference type="ChEBI" id="CHEBI:30616"/>
    </ligand>
</feature>
<feature type="binding site" evidence="1">
    <location>
        <position position="225"/>
    </location>
    <ligand>
        <name>substrate</name>
    </ligand>
</feature>
<reference key="1">
    <citation type="journal article" date="1996" name="Biochem. J.">
        <title>Molecular cloning and overexpression of a glutathione transferase gene from Proteus mirabilis.</title>
        <authorList>
            <person name="Perito B."/>
            <person name="Allocati N."/>
            <person name="Casalone E."/>
            <person name="Masulli M."/>
            <person name="Dragani B."/>
            <person name="Polsinelli M."/>
            <person name="Aceto A."/>
            <person name="Di Ilio C."/>
        </authorList>
    </citation>
    <scope>NUCLEOTIDE SEQUENCE [GENOMIC DNA]</scope>
    <source>
        <strain>AF 2924</strain>
    </source>
</reference>
<reference key="2">
    <citation type="unpublished observations" date="2000-05">
        <authorList>
            <person name="Bairoch A."/>
        </authorList>
    </citation>
    <scope>IDENTIFICATION OF PROBABLE FRAMESHIFT</scope>
</reference>
<comment type="function">
    <text evidence="1">Pyridoxal kinase involved in the salvage pathway of pyridoxal 5'-phosphate (PLP). Catalyzes the phosphorylation of pyridoxal to PLP.</text>
</comment>
<comment type="catalytic activity">
    <reaction evidence="1">
        <text>pyridoxal + ATP = pyridoxal 5'-phosphate + ADP + H(+)</text>
        <dbReference type="Rhea" id="RHEA:10224"/>
        <dbReference type="ChEBI" id="CHEBI:15378"/>
        <dbReference type="ChEBI" id="CHEBI:17310"/>
        <dbReference type="ChEBI" id="CHEBI:30616"/>
        <dbReference type="ChEBI" id="CHEBI:456216"/>
        <dbReference type="ChEBI" id="CHEBI:597326"/>
        <dbReference type="EC" id="2.7.1.35"/>
    </reaction>
</comment>
<comment type="cofactor">
    <cofactor evidence="1">
        <name>Mg(2+)</name>
        <dbReference type="ChEBI" id="CHEBI:18420"/>
    </cofactor>
</comment>
<comment type="pathway">
    <text evidence="1">Cofactor metabolism; pyridoxal 5'-phosphate salvage; pyridoxal 5'-phosphate from pyridoxal: step 1/1.</text>
</comment>
<comment type="subunit">
    <text evidence="1">Homodimer.</text>
</comment>
<comment type="similarity">
    <text evidence="1">Belongs to the pyridoxine kinase family. PdxY subfamily.</text>
</comment>
<comment type="sequence caution" evidence="2">
    <conflict type="frameshift">
        <sequence resource="EMBL-CDS" id="AAC44363"/>
    </conflict>
</comment>